<dbReference type="EMBL" id="CP000114">
    <property type="protein sequence ID" value="ABA46287.1"/>
    <property type="molecule type" value="Genomic_DNA"/>
</dbReference>
<dbReference type="RefSeq" id="WP_000497687.1">
    <property type="nucleotide sequence ID" value="NC_007432.1"/>
</dbReference>
<dbReference type="SMR" id="Q3K3V8"/>
<dbReference type="GeneID" id="66885029"/>
<dbReference type="KEGG" id="sak:SAK_0102"/>
<dbReference type="HOGENOM" id="CLU_093315_2_0_9"/>
<dbReference type="GO" id="GO:1990904">
    <property type="term" value="C:ribonucleoprotein complex"/>
    <property type="evidence" value="ECO:0007669"/>
    <property type="project" value="UniProtKB-KW"/>
</dbReference>
<dbReference type="GO" id="GO:0005840">
    <property type="term" value="C:ribosome"/>
    <property type="evidence" value="ECO:0007669"/>
    <property type="project" value="UniProtKB-KW"/>
</dbReference>
<dbReference type="GO" id="GO:0019843">
    <property type="term" value="F:rRNA binding"/>
    <property type="evidence" value="ECO:0007669"/>
    <property type="project" value="UniProtKB-UniRule"/>
</dbReference>
<dbReference type="GO" id="GO:0003735">
    <property type="term" value="F:structural constituent of ribosome"/>
    <property type="evidence" value="ECO:0007669"/>
    <property type="project" value="InterPro"/>
</dbReference>
<dbReference type="GO" id="GO:0006412">
    <property type="term" value="P:translation"/>
    <property type="evidence" value="ECO:0007669"/>
    <property type="project" value="UniProtKB-UniRule"/>
</dbReference>
<dbReference type="CDD" id="cd06089">
    <property type="entry name" value="KOW_RPL26"/>
    <property type="match status" value="1"/>
</dbReference>
<dbReference type="FunFam" id="2.30.30.30:FF:000004">
    <property type="entry name" value="50S ribosomal protein L24"/>
    <property type="match status" value="1"/>
</dbReference>
<dbReference type="Gene3D" id="2.30.30.30">
    <property type="match status" value="1"/>
</dbReference>
<dbReference type="HAMAP" id="MF_01326_B">
    <property type="entry name" value="Ribosomal_uL24_B"/>
    <property type="match status" value="1"/>
</dbReference>
<dbReference type="InterPro" id="IPR005824">
    <property type="entry name" value="KOW"/>
</dbReference>
<dbReference type="InterPro" id="IPR014722">
    <property type="entry name" value="Rib_uL2_dom2"/>
</dbReference>
<dbReference type="InterPro" id="IPR003256">
    <property type="entry name" value="Ribosomal_uL24"/>
</dbReference>
<dbReference type="InterPro" id="IPR005825">
    <property type="entry name" value="Ribosomal_uL24_CS"/>
</dbReference>
<dbReference type="InterPro" id="IPR041988">
    <property type="entry name" value="Ribosomal_uL24_KOW"/>
</dbReference>
<dbReference type="InterPro" id="IPR008991">
    <property type="entry name" value="Translation_prot_SH3-like_sf"/>
</dbReference>
<dbReference type="NCBIfam" id="TIGR01079">
    <property type="entry name" value="rplX_bact"/>
    <property type="match status" value="1"/>
</dbReference>
<dbReference type="PANTHER" id="PTHR12903">
    <property type="entry name" value="MITOCHONDRIAL RIBOSOMAL PROTEIN L24"/>
    <property type="match status" value="1"/>
</dbReference>
<dbReference type="Pfam" id="PF00467">
    <property type="entry name" value="KOW"/>
    <property type="match status" value="1"/>
</dbReference>
<dbReference type="Pfam" id="PF17136">
    <property type="entry name" value="ribosomal_L24"/>
    <property type="match status" value="1"/>
</dbReference>
<dbReference type="SMART" id="SM00739">
    <property type="entry name" value="KOW"/>
    <property type="match status" value="1"/>
</dbReference>
<dbReference type="SUPFAM" id="SSF50104">
    <property type="entry name" value="Translation proteins SH3-like domain"/>
    <property type="match status" value="1"/>
</dbReference>
<dbReference type="PROSITE" id="PS01108">
    <property type="entry name" value="RIBOSOMAL_L24"/>
    <property type="match status" value="1"/>
</dbReference>
<evidence type="ECO:0000255" key="1">
    <source>
        <dbReference type="HAMAP-Rule" id="MF_01326"/>
    </source>
</evidence>
<evidence type="ECO:0000305" key="2"/>
<comment type="function">
    <text evidence="1">One of two assembly initiator proteins, it binds directly to the 5'-end of the 23S rRNA, where it nucleates assembly of the 50S subunit.</text>
</comment>
<comment type="function">
    <text evidence="1">One of the proteins that surrounds the polypeptide exit tunnel on the outside of the subunit.</text>
</comment>
<comment type="subunit">
    <text evidence="1">Part of the 50S ribosomal subunit.</text>
</comment>
<comment type="similarity">
    <text evidence="1">Belongs to the universal ribosomal protein uL24 family.</text>
</comment>
<keyword id="KW-0687">Ribonucleoprotein</keyword>
<keyword id="KW-0689">Ribosomal protein</keyword>
<keyword id="KW-0694">RNA-binding</keyword>
<keyword id="KW-0699">rRNA-binding</keyword>
<organism>
    <name type="scientific">Streptococcus agalactiae serotype Ia (strain ATCC 27591 / A909 / CDC SS700)</name>
    <dbReference type="NCBI Taxonomy" id="205921"/>
    <lineage>
        <taxon>Bacteria</taxon>
        <taxon>Bacillati</taxon>
        <taxon>Bacillota</taxon>
        <taxon>Bacilli</taxon>
        <taxon>Lactobacillales</taxon>
        <taxon>Streptococcaceae</taxon>
        <taxon>Streptococcus</taxon>
    </lineage>
</organism>
<protein>
    <recommendedName>
        <fullName evidence="1">Large ribosomal subunit protein uL24</fullName>
    </recommendedName>
    <alternativeName>
        <fullName evidence="2">50S ribosomal protein L24</fullName>
    </alternativeName>
</protein>
<accession>Q3K3V8</accession>
<sequence length="101" mass="10939">MFVKKGDKVRVIAGKDKGTEAVVLKALPKVNKVVVEGVALIKKHQKPNNENPQGAIVEKEAPIHVSNVQVLDKNGVAGRVGYKVVDGKKVRYNKKSGEVLD</sequence>
<proteinExistence type="inferred from homology"/>
<gene>
    <name evidence="1" type="primary">rplX</name>
    <name type="ordered locus">SAK_0102</name>
</gene>
<name>RL24_STRA1</name>
<reference key="1">
    <citation type="journal article" date="2005" name="Proc. Natl. Acad. Sci. U.S.A.">
        <title>Genome analysis of multiple pathogenic isolates of Streptococcus agalactiae: implications for the microbial 'pan-genome'.</title>
        <authorList>
            <person name="Tettelin H."/>
            <person name="Masignani V."/>
            <person name="Cieslewicz M.J."/>
            <person name="Donati C."/>
            <person name="Medini D."/>
            <person name="Ward N.L."/>
            <person name="Angiuoli S.V."/>
            <person name="Crabtree J."/>
            <person name="Jones A.L."/>
            <person name="Durkin A.S."/>
            <person name="DeBoy R.T."/>
            <person name="Davidsen T.M."/>
            <person name="Mora M."/>
            <person name="Scarselli M."/>
            <person name="Margarit y Ros I."/>
            <person name="Peterson J.D."/>
            <person name="Hauser C.R."/>
            <person name="Sundaram J.P."/>
            <person name="Nelson W.C."/>
            <person name="Madupu R."/>
            <person name="Brinkac L.M."/>
            <person name="Dodson R.J."/>
            <person name="Rosovitz M.J."/>
            <person name="Sullivan S.A."/>
            <person name="Daugherty S.C."/>
            <person name="Haft D.H."/>
            <person name="Selengut J."/>
            <person name="Gwinn M.L."/>
            <person name="Zhou L."/>
            <person name="Zafar N."/>
            <person name="Khouri H."/>
            <person name="Radune D."/>
            <person name="Dimitrov G."/>
            <person name="Watkins K."/>
            <person name="O'Connor K.J."/>
            <person name="Smith S."/>
            <person name="Utterback T.R."/>
            <person name="White O."/>
            <person name="Rubens C.E."/>
            <person name="Grandi G."/>
            <person name="Madoff L.C."/>
            <person name="Kasper D.L."/>
            <person name="Telford J.L."/>
            <person name="Wessels M.R."/>
            <person name="Rappuoli R."/>
            <person name="Fraser C.M."/>
        </authorList>
    </citation>
    <scope>NUCLEOTIDE SEQUENCE [LARGE SCALE GENOMIC DNA]</scope>
    <source>
        <strain>ATCC 27591 / A909 / CDC SS700</strain>
    </source>
</reference>
<feature type="chain" id="PRO_0000241667" description="Large ribosomal subunit protein uL24">
    <location>
        <begin position="1"/>
        <end position="101"/>
    </location>
</feature>